<organism>
    <name type="scientific">Shewanella halifaxensis (strain HAW-EB4)</name>
    <dbReference type="NCBI Taxonomy" id="458817"/>
    <lineage>
        <taxon>Bacteria</taxon>
        <taxon>Pseudomonadati</taxon>
        <taxon>Pseudomonadota</taxon>
        <taxon>Gammaproteobacteria</taxon>
        <taxon>Alteromonadales</taxon>
        <taxon>Shewanellaceae</taxon>
        <taxon>Shewanella</taxon>
    </lineage>
</organism>
<proteinExistence type="inferred from homology"/>
<protein>
    <recommendedName>
        <fullName evidence="1">Large ribosomal subunit protein uL16</fullName>
    </recommendedName>
    <alternativeName>
        <fullName evidence="2">50S ribosomal protein L16</fullName>
    </alternativeName>
</protein>
<evidence type="ECO:0000255" key="1">
    <source>
        <dbReference type="HAMAP-Rule" id="MF_01342"/>
    </source>
</evidence>
<evidence type="ECO:0000305" key="2"/>
<name>RL16_SHEHH</name>
<reference key="1">
    <citation type="submission" date="2008-01" db="EMBL/GenBank/DDBJ databases">
        <title>Complete sequence of Shewanella halifaxensis HAW-EB4.</title>
        <authorList>
            <consortium name="US DOE Joint Genome Institute"/>
            <person name="Copeland A."/>
            <person name="Lucas S."/>
            <person name="Lapidus A."/>
            <person name="Glavina del Rio T."/>
            <person name="Dalin E."/>
            <person name="Tice H."/>
            <person name="Bruce D."/>
            <person name="Goodwin L."/>
            <person name="Pitluck S."/>
            <person name="Sims D."/>
            <person name="Brettin T."/>
            <person name="Detter J.C."/>
            <person name="Han C."/>
            <person name="Kuske C.R."/>
            <person name="Schmutz J."/>
            <person name="Larimer F."/>
            <person name="Land M."/>
            <person name="Hauser L."/>
            <person name="Kyrpides N."/>
            <person name="Kim E."/>
            <person name="Zhao J.-S."/>
            <person name="Richardson P."/>
        </authorList>
    </citation>
    <scope>NUCLEOTIDE SEQUENCE [LARGE SCALE GENOMIC DNA]</scope>
    <source>
        <strain>HAW-EB4</strain>
    </source>
</reference>
<feature type="chain" id="PRO_1000086777" description="Large ribosomal subunit protein uL16">
    <location>
        <begin position="1"/>
        <end position="136"/>
    </location>
</feature>
<keyword id="KW-0687">Ribonucleoprotein</keyword>
<keyword id="KW-0689">Ribosomal protein</keyword>
<keyword id="KW-0694">RNA-binding</keyword>
<keyword id="KW-0699">rRNA-binding</keyword>
<keyword id="KW-0820">tRNA-binding</keyword>
<gene>
    <name evidence="1" type="primary">rplP</name>
    <name type="ordered locus">Shal_4127</name>
</gene>
<comment type="function">
    <text evidence="1">Binds 23S rRNA and is also seen to make contacts with the A and possibly P site tRNAs.</text>
</comment>
<comment type="subunit">
    <text evidence="1">Part of the 50S ribosomal subunit.</text>
</comment>
<comment type="similarity">
    <text evidence="1">Belongs to the universal ribosomal protein uL16 family.</text>
</comment>
<dbReference type="EMBL" id="CP000931">
    <property type="protein sequence ID" value="ABZ78667.1"/>
    <property type="molecule type" value="Genomic_DNA"/>
</dbReference>
<dbReference type="RefSeq" id="WP_012279176.1">
    <property type="nucleotide sequence ID" value="NC_010334.1"/>
</dbReference>
<dbReference type="SMR" id="B0TM05"/>
<dbReference type="STRING" id="458817.Shal_4127"/>
<dbReference type="KEGG" id="shl:Shal_4127"/>
<dbReference type="eggNOG" id="COG0197">
    <property type="taxonomic scope" value="Bacteria"/>
</dbReference>
<dbReference type="HOGENOM" id="CLU_078858_2_1_6"/>
<dbReference type="OrthoDB" id="9802589at2"/>
<dbReference type="Proteomes" id="UP000001317">
    <property type="component" value="Chromosome"/>
</dbReference>
<dbReference type="GO" id="GO:0022625">
    <property type="term" value="C:cytosolic large ribosomal subunit"/>
    <property type="evidence" value="ECO:0007669"/>
    <property type="project" value="TreeGrafter"/>
</dbReference>
<dbReference type="GO" id="GO:0019843">
    <property type="term" value="F:rRNA binding"/>
    <property type="evidence" value="ECO:0007669"/>
    <property type="project" value="UniProtKB-UniRule"/>
</dbReference>
<dbReference type="GO" id="GO:0003735">
    <property type="term" value="F:structural constituent of ribosome"/>
    <property type="evidence" value="ECO:0007669"/>
    <property type="project" value="InterPro"/>
</dbReference>
<dbReference type="GO" id="GO:0000049">
    <property type="term" value="F:tRNA binding"/>
    <property type="evidence" value="ECO:0007669"/>
    <property type="project" value="UniProtKB-KW"/>
</dbReference>
<dbReference type="GO" id="GO:0006412">
    <property type="term" value="P:translation"/>
    <property type="evidence" value="ECO:0007669"/>
    <property type="project" value="UniProtKB-UniRule"/>
</dbReference>
<dbReference type="CDD" id="cd01433">
    <property type="entry name" value="Ribosomal_L16_L10e"/>
    <property type="match status" value="1"/>
</dbReference>
<dbReference type="FunFam" id="3.90.1170.10:FF:000001">
    <property type="entry name" value="50S ribosomal protein L16"/>
    <property type="match status" value="1"/>
</dbReference>
<dbReference type="Gene3D" id="3.90.1170.10">
    <property type="entry name" value="Ribosomal protein L10e/L16"/>
    <property type="match status" value="1"/>
</dbReference>
<dbReference type="HAMAP" id="MF_01342">
    <property type="entry name" value="Ribosomal_uL16"/>
    <property type="match status" value="1"/>
</dbReference>
<dbReference type="InterPro" id="IPR047873">
    <property type="entry name" value="Ribosomal_uL16"/>
</dbReference>
<dbReference type="InterPro" id="IPR000114">
    <property type="entry name" value="Ribosomal_uL16_bact-type"/>
</dbReference>
<dbReference type="InterPro" id="IPR020798">
    <property type="entry name" value="Ribosomal_uL16_CS"/>
</dbReference>
<dbReference type="InterPro" id="IPR016180">
    <property type="entry name" value="Ribosomal_uL16_dom"/>
</dbReference>
<dbReference type="InterPro" id="IPR036920">
    <property type="entry name" value="Ribosomal_uL16_sf"/>
</dbReference>
<dbReference type="NCBIfam" id="TIGR01164">
    <property type="entry name" value="rplP_bact"/>
    <property type="match status" value="1"/>
</dbReference>
<dbReference type="PANTHER" id="PTHR12220">
    <property type="entry name" value="50S/60S RIBOSOMAL PROTEIN L16"/>
    <property type="match status" value="1"/>
</dbReference>
<dbReference type="PANTHER" id="PTHR12220:SF13">
    <property type="entry name" value="LARGE RIBOSOMAL SUBUNIT PROTEIN UL16M"/>
    <property type="match status" value="1"/>
</dbReference>
<dbReference type="Pfam" id="PF00252">
    <property type="entry name" value="Ribosomal_L16"/>
    <property type="match status" value="1"/>
</dbReference>
<dbReference type="PRINTS" id="PR00060">
    <property type="entry name" value="RIBOSOMALL16"/>
</dbReference>
<dbReference type="SUPFAM" id="SSF54686">
    <property type="entry name" value="Ribosomal protein L16p/L10e"/>
    <property type="match status" value="1"/>
</dbReference>
<dbReference type="PROSITE" id="PS00586">
    <property type="entry name" value="RIBOSOMAL_L16_1"/>
    <property type="match status" value="1"/>
</dbReference>
<dbReference type="PROSITE" id="PS00701">
    <property type="entry name" value="RIBOSOMAL_L16_2"/>
    <property type="match status" value="1"/>
</dbReference>
<sequence length="136" mass="15468">MLQPKRMKFRKMFKGRNRGLANGTEVSFGEFGLKAVGRGRLTARQIEAARRAMTRHIKRQGQIWIRVFPDKPITSKPLEVRMGKGKGNVEYWVCQIQPGKVLYEMNGVSEELAREAFTLAAAKLPLKTTFVTKTVM</sequence>
<accession>B0TM05</accession>